<proteinExistence type="inferred from homology"/>
<feature type="chain" id="PRO_1000066082" description="D-amino acid dehydrogenase">
    <location>
        <begin position="1"/>
        <end position="428"/>
    </location>
</feature>
<feature type="binding site" evidence="1">
    <location>
        <begin position="3"/>
        <end position="17"/>
    </location>
    <ligand>
        <name>FAD</name>
        <dbReference type="ChEBI" id="CHEBI:57692"/>
    </ligand>
</feature>
<comment type="function">
    <text evidence="1">Oxidative deamination of D-amino acids.</text>
</comment>
<comment type="catalytic activity">
    <reaction evidence="1">
        <text>a D-alpha-amino acid + A + H2O = a 2-oxocarboxylate + AH2 + NH4(+)</text>
        <dbReference type="Rhea" id="RHEA:18125"/>
        <dbReference type="ChEBI" id="CHEBI:13193"/>
        <dbReference type="ChEBI" id="CHEBI:15377"/>
        <dbReference type="ChEBI" id="CHEBI:17499"/>
        <dbReference type="ChEBI" id="CHEBI:28938"/>
        <dbReference type="ChEBI" id="CHEBI:35179"/>
        <dbReference type="ChEBI" id="CHEBI:59871"/>
    </reaction>
</comment>
<comment type="cofactor">
    <cofactor evidence="1">
        <name>FAD</name>
        <dbReference type="ChEBI" id="CHEBI:57692"/>
    </cofactor>
</comment>
<comment type="pathway">
    <text>Amino-acid degradation; D-alanine degradation; NH(3) and pyruvate from D-alanine: step 1/1.</text>
</comment>
<comment type="similarity">
    <text evidence="1">Belongs to the DadA oxidoreductase family.</text>
</comment>
<gene>
    <name evidence="1" type="primary">dadA</name>
    <name type="ordered locus">BPSL2497</name>
</gene>
<sequence>MRVVILGSGVVGVASAYYLARAGHEVTVIDREAGPALDTSFANAGQISPGYAAPWAAPGVPLKAVKWMFEKHAPLAIRLDGTRFQLQWMWQMLRNCTTERYALNKGRMVRLAEYSRDCLQALRAETAIQYEGRTGGTLQVFRTQQQLDGAAKDIAVLREANVPFELLSSDELKKAEPALAAVSHKLTGGLRLPGDETGDCQLFTTRLAALAEQLGVKFRFNTRIDALAVAGGKIAGVQCGGEMVRADAYVVALGSYSTNLVASLVKIPVYPLKGYSITAPIVDAAKAPVSTVLDETYKIAITRFDDRIRVGGMAEIVGFDKRLRDARRGTLEMCVNDLFPGGGDTEKATFWTGLRPMTPDGTPIVGRTPVPNLFLNTGHGTLGWTMSCGSGQLLADLMSGKKPAIRADDLSVHRYLSETDGEHRPAYA</sequence>
<reference key="1">
    <citation type="journal article" date="2004" name="Proc. Natl. Acad. Sci. U.S.A.">
        <title>Genomic plasticity of the causative agent of melioidosis, Burkholderia pseudomallei.</title>
        <authorList>
            <person name="Holden M.T.G."/>
            <person name="Titball R.W."/>
            <person name="Peacock S.J."/>
            <person name="Cerdeno-Tarraga A.-M."/>
            <person name="Atkins T."/>
            <person name="Crossman L.C."/>
            <person name="Pitt T."/>
            <person name="Churcher C."/>
            <person name="Mungall K.L."/>
            <person name="Bentley S.D."/>
            <person name="Sebaihia M."/>
            <person name="Thomson N.R."/>
            <person name="Bason N."/>
            <person name="Beacham I.R."/>
            <person name="Brooks K."/>
            <person name="Brown K.A."/>
            <person name="Brown N.F."/>
            <person name="Challis G.L."/>
            <person name="Cherevach I."/>
            <person name="Chillingworth T."/>
            <person name="Cronin A."/>
            <person name="Crossett B."/>
            <person name="Davis P."/>
            <person name="DeShazer D."/>
            <person name="Feltwell T."/>
            <person name="Fraser A."/>
            <person name="Hance Z."/>
            <person name="Hauser H."/>
            <person name="Holroyd S."/>
            <person name="Jagels K."/>
            <person name="Keith K.E."/>
            <person name="Maddison M."/>
            <person name="Moule S."/>
            <person name="Price C."/>
            <person name="Quail M.A."/>
            <person name="Rabbinowitsch E."/>
            <person name="Rutherford K."/>
            <person name="Sanders M."/>
            <person name="Simmonds M."/>
            <person name="Songsivilai S."/>
            <person name="Stevens K."/>
            <person name="Tumapa S."/>
            <person name="Vesaratchavest M."/>
            <person name="Whitehead S."/>
            <person name="Yeats C."/>
            <person name="Barrell B.G."/>
            <person name="Oyston P.C.F."/>
            <person name="Parkhill J."/>
        </authorList>
    </citation>
    <scope>NUCLEOTIDE SEQUENCE [LARGE SCALE GENOMIC DNA]</scope>
    <source>
        <strain>K96243</strain>
    </source>
</reference>
<accession>Q63S25</accession>
<protein>
    <recommendedName>
        <fullName evidence="1">D-amino acid dehydrogenase</fullName>
        <ecNumber evidence="1">1.4.99.-</ecNumber>
    </recommendedName>
</protein>
<organism>
    <name type="scientific">Burkholderia pseudomallei (strain K96243)</name>
    <dbReference type="NCBI Taxonomy" id="272560"/>
    <lineage>
        <taxon>Bacteria</taxon>
        <taxon>Pseudomonadati</taxon>
        <taxon>Pseudomonadota</taxon>
        <taxon>Betaproteobacteria</taxon>
        <taxon>Burkholderiales</taxon>
        <taxon>Burkholderiaceae</taxon>
        <taxon>Burkholderia</taxon>
        <taxon>pseudomallei group</taxon>
    </lineage>
</organism>
<dbReference type="EC" id="1.4.99.-" evidence="1"/>
<dbReference type="EMBL" id="BX571965">
    <property type="protein sequence ID" value="CAH36503.1"/>
    <property type="molecule type" value="Genomic_DNA"/>
</dbReference>
<dbReference type="RefSeq" id="WP_004544221.1">
    <property type="nucleotide sequence ID" value="NZ_CP009538.1"/>
</dbReference>
<dbReference type="RefSeq" id="YP_109092.1">
    <property type="nucleotide sequence ID" value="NC_006350.1"/>
</dbReference>
<dbReference type="SMR" id="Q63S25"/>
<dbReference type="STRING" id="272560.BPSL2497"/>
<dbReference type="KEGG" id="bps:BPSL2497"/>
<dbReference type="PATRIC" id="fig|272560.51.peg.2885"/>
<dbReference type="eggNOG" id="COG0665">
    <property type="taxonomic scope" value="Bacteria"/>
</dbReference>
<dbReference type="UniPathway" id="UPA00043">
    <property type="reaction ID" value="UER00498"/>
</dbReference>
<dbReference type="Proteomes" id="UP000000605">
    <property type="component" value="Chromosome 1"/>
</dbReference>
<dbReference type="GO" id="GO:0005737">
    <property type="term" value="C:cytoplasm"/>
    <property type="evidence" value="ECO:0007669"/>
    <property type="project" value="TreeGrafter"/>
</dbReference>
<dbReference type="GO" id="GO:0005886">
    <property type="term" value="C:plasma membrane"/>
    <property type="evidence" value="ECO:0007669"/>
    <property type="project" value="TreeGrafter"/>
</dbReference>
<dbReference type="GO" id="GO:0008718">
    <property type="term" value="F:D-amino-acid dehydrogenase activity"/>
    <property type="evidence" value="ECO:0007669"/>
    <property type="project" value="UniProtKB-UniRule"/>
</dbReference>
<dbReference type="GO" id="GO:0055130">
    <property type="term" value="P:D-alanine catabolic process"/>
    <property type="evidence" value="ECO:0007669"/>
    <property type="project" value="UniProtKB-UniPathway"/>
</dbReference>
<dbReference type="FunFam" id="3.50.50.60:FF:000020">
    <property type="entry name" value="D-amino acid dehydrogenase"/>
    <property type="match status" value="1"/>
</dbReference>
<dbReference type="Gene3D" id="3.30.9.10">
    <property type="entry name" value="D-Amino Acid Oxidase, subunit A, domain 2"/>
    <property type="match status" value="1"/>
</dbReference>
<dbReference type="Gene3D" id="3.50.50.60">
    <property type="entry name" value="FAD/NAD(P)-binding domain"/>
    <property type="match status" value="2"/>
</dbReference>
<dbReference type="HAMAP" id="MF_01202">
    <property type="entry name" value="DadA"/>
    <property type="match status" value="1"/>
</dbReference>
<dbReference type="InterPro" id="IPR023080">
    <property type="entry name" value="DadA"/>
</dbReference>
<dbReference type="InterPro" id="IPR006076">
    <property type="entry name" value="FAD-dep_OxRdtase"/>
</dbReference>
<dbReference type="InterPro" id="IPR036188">
    <property type="entry name" value="FAD/NAD-bd_sf"/>
</dbReference>
<dbReference type="NCBIfam" id="NF001933">
    <property type="entry name" value="PRK00711.1"/>
    <property type="match status" value="1"/>
</dbReference>
<dbReference type="PANTHER" id="PTHR13847:SF280">
    <property type="entry name" value="D-AMINO ACID DEHYDROGENASE"/>
    <property type="match status" value="1"/>
</dbReference>
<dbReference type="PANTHER" id="PTHR13847">
    <property type="entry name" value="SARCOSINE DEHYDROGENASE-RELATED"/>
    <property type="match status" value="1"/>
</dbReference>
<dbReference type="Pfam" id="PF01266">
    <property type="entry name" value="DAO"/>
    <property type="match status" value="1"/>
</dbReference>
<dbReference type="SUPFAM" id="SSF54373">
    <property type="entry name" value="FAD-linked reductases, C-terminal domain"/>
    <property type="match status" value="1"/>
</dbReference>
<dbReference type="SUPFAM" id="SSF51905">
    <property type="entry name" value="FAD/NAD(P)-binding domain"/>
    <property type="match status" value="1"/>
</dbReference>
<keyword id="KW-0274">FAD</keyword>
<keyword id="KW-0285">Flavoprotein</keyword>
<keyword id="KW-0560">Oxidoreductase</keyword>
<keyword id="KW-1185">Reference proteome</keyword>
<name>DADA_BURPS</name>
<evidence type="ECO:0000255" key="1">
    <source>
        <dbReference type="HAMAP-Rule" id="MF_01202"/>
    </source>
</evidence>